<comment type="function">
    <text evidence="1">One of the extrinsic, lumenal subunits of photosystem II (PSII). PSII is a light-driven water plastoquinone oxidoreductase, using light energy to abstract electrons from H(2)O, generating a proton gradient subsequently used for ATP formation. The extrinsic proteins stabilize the structure of photosystem II oxygen-evolving complex (OEC), the ion environment of oxygen evolution and protect the OEC against heat-induced inactivation. Low-potential cytochrome c that plays a role in the OEC of PSII.</text>
</comment>
<comment type="cofactor">
    <cofactor evidence="1">
        <name>heme c</name>
        <dbReference type="ChEBI" id="CHEBI:61717"/>
    </cofactor>
    <text evidence="1">Binds 1 heme c group covalently per subunit.</text>
</comment>
<comment type="subunit">
    <text evidence="1">PSII is composed of 1 copy each of membrane proteins PsbA, PsbB, PsbC, PsbD, PsbE, PsbF, PsbH, PsbI, PsbJ, PsbK, PsbL, PsbM, PsbT, PsbX, PsbY, PsbZ, Psb30/Ycf12, peripheral proteins PsbO, CyanoQ (PsbQ), PsbU, PsbV and a large number of cofactors. It forms dimeric complexes.</text>
</comment>
<comment type="subcellular location">
    <subcellularLocation>
        <location evidence="1">Cellular thylakoid membrane</location>
        <topology evidence="1">Peripheral membrane protein</topology>
        <orientation evidence="1">Lumenal side</orientation>
    </subcellularLocation>
    <text evidence="1">Associated with photosystem II at the lumenal side of the thylakoid membrane.</text>
</comment>
<comment type="similarity">
    <text evidence="1">Belongs to the cytochrome c family. PsbV subfamily.</text>
</comment>
<reference key="1">
    <citation type="journal article" date="2015" name="Proc. Natl. Acad. Sci. U.S.A.">
        <title>Trichodesmium genome maintains abundant, widespread noncoding DNA in situ, despite oligotrophic lifestyle.</title>
        <authorList>
            <person name="Walworth N."/>
            <person name="Pfreundt U."/>
            <person name="Nelson W.C."/>
            <person name="Mincer T."/>
            <person name="Heidelberg J.F."/>
            <person name="Fu F."/>
            <person name="Waterbury J.B."/>
            <person name="Glavina del Rio T."/>
            <person name="Goodwin L."/>
            <person name="Kyrpides N.C."/>
            <person name="Land M.L."/>
            <person name="Woyke T."/>
            <person name="Hutchins D.A."/>
            <person name="Hess W.R."/>
            <person name="Webb E.A."/>
        </authorList>
    </citation>
    <scope>NUCLEOTIDE SEQUENCE [LARGE SCALE GENOMIC DNA]</scope>
    <source>
        <strain>IMS101</strain>
    </source>
</reference>
<organism>
    <name type="scientific">Trichodesmium erythraeum (strain IMS101)</name>
    <dbReference type="NCBI Taxonomy" id="203124"/>
    <lineage>
        <taxon>Bacteria</taxon>
        <taxon>Bacillati</taxon>
        <taxon>Cyanobacteriota</taxon>
        <taxon>Cyanophyceae</taxon>
        <taxon>Oscillatoriophycideae</taxon>
        <taxon>Oscillatoriales</taxon>
        <taxon>Microcoleaceae</taxon>
        <taxon>Trichodesmium</taxon>
    </lineage>
</organism>
<sequence length="161" mass="18118">MKKFFISVVFIVLLTFTTFINSATAAKLDDNVRTLPLNEDKEVVLTIKEYTQGKREFTNVCSQCHVGGITKTNPDVSLDPETLALAYPARDNIEGLIDYMQNPTTYDGFIEISEFHPSIKSADIYPEMRNLTEDDLYAIAGYILVQPKVLGKQWGGGKIFR</sequence>
<keyword id="KW-0249">Electron transport</keyword>
<keyword id="KW-0349">Heme</keyword>
<keyword id="KW-0408">Iron</keyword>
<keyword id="KW-0472">Membrane</keyword>
<keyword id="KW-0479">Metal-binding</keyword>
<keyword id="KW-0602">Photosynthesis</keyword>
<keyword id="KW-0604">Photosystem II</keyword>
<keyword id="KW-0732">Signal</keyword>
<keyword id="KW-0793">Thylakoid</keyword>
<keyword id="KW-0813">Transport</keyword>
<gene>
    <name evidence="1" type="primary">psbV</name>
    <name type="ordered locus">Tery_2686</name>
</gene>
<protein>
    <recommendedName>
        <fullName evidence="1">Photosystem II extrinsic protein V</fullName>
        <shortName evidence="1">PsbV</shortName>
    </recommendedName>
    <alternativeName>
        <fullName evidence="1">Cytochrome c-550</fullName>
    </alternativeName>
    <alternativeName>
        <fullName evidence="1">Cytochrome c550</fullName>
    </alternativeName>
    <alternativeName>
        <fullName evidence="1">Low-potential cytochrome c</fullName>
    </alternativeName>
</protein>
<evidence type="ECO:0000255" key="1">
    <source>
        <dbReference type="HAMAP-Rule" id="MF_01378"/>
    </source>
</evidence>
<proteinExistence type="inferred from homology"/>
<feature type="signal peptide" evidence="1">
    <location>
        <begin position="1"/>
        <end position="25"/>
    </location>
</feature>
<feature type="chain" id="PRO_5000126970" description="Photosystem II extrinsic protein V">
    <location>
        <begin position="26"/>
        <end position="161"/>
    </location>
</feature>
<feature type="binding site" description="covalent" evidence="1">
    <location>
        <position position="61"/>
    </location>
    <ligand>
        <name>heme c</name>
        <dbReference type="ChEBI" id="CHEBI:61717"/>
    </ligand>
</feature>
<feature type="binding site" description="covalent" evidence="1">
    <location>
        <position position="64"/>
    </location>
    <ligand>
        <name>heme c</name>
        <dbReference type="ChEBI" id="CHEBI:61717"/>
    </ligand>
</feature>
<feature type="binding site" description="axial binding residue" evidence="1">
    <location>
        <position position="65"/>
    </location>
    <ligand>
        <name>heme c</name>
        <dbReference type="ChEBI" id="CHEBI:61717"/>
    </ligand>
    <ligandPart>
        <name>Fe</name>
        <dbReference type="ChEBI" id="CHEBI:18248"/>
    </ligandPart>
</feature>
<feature type="binding site" description="axial binding residue" evidence="1">
    <location>
        <position position="116"/>
    </location>
    <ligand>
        <name>heme c</name>
        <dbReference type="ChEBI" id="CHEBI:61717"/>
    </ligand>
    <ligandPart>
        <name>Fe</name>
        <dbReference type="ChEBI" id="CHEBI:18248"/>
    </ligandPart>
</feature>
<dbReference type="EMBL" id="CP000393">
    <property type="protein sequence ID" value="ABG51875.1"/>
    <property type="molecule type" value="Genomic_DNA"/>
</dbReference>
<dbReference type="RefSeq" id="WP_011612237.1">
    <property type="nucleotide sequence ID" value="NC_008312.1"/>
</dbReference>
<dbReference type="SMR" id="Q111E9"/>
<dbReference type="STRING" id="203124.Tery_2686"/>
<dbReference type="KEGG" id="ter:Tery_2686"/>
<dbReference type="eggNOG" id="COG2010">
    <property type="taxonomic scope" value="Bacteria"/>
</dbReference>
<dbReference type="HOGENOM" id="CLU_104149_1_0_3"/>
<dbReference type="OrthoDB" id="486949at2"/>
<dbReference type="GO" id="GO:0009523">
    <property type="term" value="C:photosystem II"/>
    <property type="evidence" value="ECO:0007669"/>
    <property type="project" value="UniProtKB-KW"/>
</dbReference>
<dbReference type="GO" id="GO:0031676">
    <property type="term" value="C:plasma membrane-derived thylakoid membrane"/>
    <property type="evidence" value="ECO:0007669"/>
    <property type="project" value="UniProtKB-SubCell"/>
</dbReference>
<dbReference type="GO" id="GO:0009055">
    <property type="term" value="F:electron transfer activity"/>
    <property type="evidence" value="ECO:0007669"/>
    <property type="project" value="InterPro"/>
</dbReference>
<dbReference type="GO" id="GO:0020037">
    <property type="term" value="F:heme binding"/>
    <property type="evidence" value="ECO:0007669"/>
    <property type="project" value="InterPro"/>
</dbReference>
<dbReference type="GO" id="GO:0005506">
    <property type="term" value="F:iron ion binding"/>
    <property type="evidence" value="ECO:0007669"/>
    <property type="project" value="InterPro"/>
</dbReference>
<dbReference type="GO" id="GO:0019684">
    <property type="term" value="P:photosynthesis, light reaction"/>
    <property type="evidence" value="ECO:0007669"/>
    <property type="project" value="UniProtKB-UniRule"/>
</dbReference>
<dbReference type="GO" id="GO:0022904">
    <property type="term" value="P:respiratory electron transport chain"/>
    <property type="evidence" value="ECO:0007669"/>
    <property type="project" value="InterPro"/>
</dbReference>
<dbReference type="Gene3D" id="1.10.760.10">
    <property type="entry name" value="Cytochrome c-like domain"/>
    <property type="match status" value="1"/>
</dbReference>
<dbReference type="HAMAP" id="MF_01378">
    <property type="entry name" value="PSII_Cyt550"/>
    <property type="match status" value="1"/>
</dbReference>
<dbReference type="InterPro" id="IPR009056">
    <property type="entry name" value="Cyt_c-like_dom"/>
</dbReference>
<dbReference type="InterPro" id="IPR036909">
    <property type="entry name" value="Cyt_c-like_dom_sf"/>
</dbReference>
<dbReference type="InterPro" id="IPR029490">
    <property type="entry name" value="Cytochrom_C550"/>
</dbReference>
<dbReference type="InterPro" id="IPR017851">
    <property type="entry name" value="PsbV_cyt_c550"/>
</dbReference>
<dbReference type="InterPro" id="IPR016003">
    <property type="entry name" value="PsbV_cyt_c550-like"/>
</dbReference>
<dbReference type="NCBIfam" id="TIGR03045">
    <property type="entry name" value="PS_II_C550"/>
    <property type="match status" value="1"/>
</dbReference>
<dbReference type="Pfam" id="PF14495">
    <property type="entry name" value="Cytochrom_C550"/>
    <property type="match status" value="1"/>
</dbReference>
<dbReference type="PIRSF" id="PIRSF005890">
    <property type="entry name" value="Phot_II_cyt_c550"/>
    <property type="match status" value="1"/>
</dbReference>
<dbReference type="SUPFAM" id="SSF46626">
    <property type="entry name" value="Cytochrome c"/>
    <property type="match status" value="1"/>
</dbReference>
<dbReference type="PROSITE" id="PS51007">
    <property type="entry name" value="CYTC"/>
    <property type="match status" value="1"/>
</dbReference>
<accession>Q111E9</accession>
<name>CY550_TRIEI</name>